<organism>
    <name type="scientific">Yarrowia lipolytica (strain CLIB 122 / E 150)</name>
    <name type="common">Yeast</name>
    <name type="synonym">Candida lipolytica</name>
    <dbReference type="NCBI Taxonomy" id="284591"/>
    <lineage>
        <taxon>Eukaryota</taxon>
        <taxon>Fungi</taxon>
        <taxon>Dikarya</taxon>
        <taxon>Ascomycota</taxon>
        <taxon>Saccharomycotina</taxon>
        <taxon>Dipodascomycetes</taxon>
        <taxon>Dipodascales</taxon>
        <taxon>Dipodascales incertae sedis</taxon>
        <taxon>Yarrowia</taxon>
    </lineage>
</organism>
<keyword id="KW-0072">Autophagy</keyword>
<keyword id="KW-0968">Cytoplasmic vesicle</keyword>
<keyword id="KW-0449">Lipoprotein</keyword>
<keyword id="KW-0472">Membrane</keyword>
<keyword id="KW-0653">Protein transport</keyword>
<keyword id="KW-1185">Reference proteome</keyword>
<keyword id="KW-0813">Transport</keyword>
<keyword id="KW-0833">Ubl conjugation pathway</keyword>
<keyword id="KW-0926">Vacuole</keyword>
<proteinExistence type="inferred from homology"/>
<dbReference type="EMBL" id="CR382131">
    <property type="protein sequence ID" value="CAG79047.2"/>
    <property type="molecule type" value="Genomic_DNA"/>
</dbReference>
<dbReference type="RefSeq" id="XP_503468.2">
    <property type="nucleotide sequence ID" value="XM_503468.2"/>
</dbReference>
<dbReference type="SMR" id="Q6C794"/>
<dbReference type="FunCoup" id="Q6C794">
    <property type="interactions" value="583"/>
</dbReference>
<dbReference type="STRING" id="284591.Q6C794"/>
<dbReference type="EnsemblFungi" id="CAG79047">
    <property type="protein sequence ID" value="CAG79047"/>
    <property type="gene ID" value="YALI0_E02662g"/>
</dbReference>
<dbReference type="VEuPathDB" id="FungiDB:YALI0_E02662g"/>
<dbReference type="HOGENOM" id="CLU_119276_0_1_1"/>
<dbReference type="InParanoid" id="Q6C794"/>
<dbReference type="OMA" id="AVYQEHK"/>
<dbReference type="OrthoDB" id="70706at4891"/>
<dbReference type="Proteomes" id="UP000001300">
    <property type="component" value="Chromosome E"/>
</dbReference>
<dbReference type="GO" id="GO:0000421">
    <property type="term" value="C:autophagosome membrane"/>
    <property type="evidence" value="ECO:0000318"/>
    <property type="project" value="GO_Central"/>
</dbReference>
<dbReference type="GO" id="GO:0031410">
    <property type="term" value="C:cytoplasmic vesicle"/>
    <property type="evidence" value="ECO:0007669"/>
    <property type="project" value="UniProtKB-KW"/>
</dbReference>
<dbReference type="GO" id="GO:0000329">
    <property type="term" value="C:fungal-type vacuole membrane"/>
    <property type="evidence" value="ECO:0000318"/>
    <property type="project" value="GO_Central"/>
</dbReference>
<dbReference type="GO" id="GO:0008429">
    <property type="term" value="F:phosphatidylethanolamine binding"/>
    <property type="evidence" value="ECO:0000318"/>
    <property type="project" value="GO_Central"/>
</dbReference>
<dbReference type="GO" id="GO:0000045">
    <property type="term" value="P:autophagosome assembly"/>
    <property type="evidence" value="ECO:0000318"/>
    <property type="project" value="GO_Central"/>
</dbReference>
<dbReference type="GO" id="GO:0097352">
    <property type="term" value="P:autophagosome maturation"/>
    <property type="evidence" value="ECO:0000318"/>
    <property type="project" value="GO_Central"/>
</dbReference>
<dbReference type="GO" id="GO:0006995">
    <property type="term" value="P:cellular response to nitrogen starvation"/>
    <property type="evidence" value="ECO:0000318"/>
    <property type="project" value="GO_Central"/>
</dbReference>
<dbReference type="GO" id="GO:0000423">
    <property type="term" value="P:mitophagy"/>
    <property type="evidence" value="ECO:0000318"/>
    <property type="project" value="GO_Central"/>
</dbReference>
<dbReference type="GO" id="GO:0015031">
    <property type="term" value="P:protein transport"/>
    <property type="evidence" value="ECO:0007669"/>
    <property type="project" value="UniProtKB-KW"/>
</dbReference>
<dbReference type="CDD" id="cd16128">
    <property type="entry name" value="Ubl_ATG8"/>
    <property type="match status" value="1"/>
</dbReference>
<dbReference type="FunFam" id="3.10.20.90:FF:000010">
    <property type="entry name" value="Autophagy-related protein"/>
    <property type="match status" value="1"/>
</dbReference>
<dbReference type="Gene3D" id="3.10.20.90">
    <property type="entry name" value="Phosphatidylinositol 3-kinase Catalytic Subunit, Chain A, domain 1"/>
    <property type="match status" value="1"/>
</dbReference>
<dbReference type="InterPro" id="IPR004241">
    <property type="entry name" value="Atg8-like"/>
</dbReference>
<dbReference type="InterPro" id="IPR029071">
    <property type="entry name" value="Ubiquitin-like_domsf"/>
</dbReference>
<dbReference type="PANTHER" id="PTHR10969">
    <property type="entry name" value="MICROTUBULE-ASSOCIATED PROTEINS 1A/1B LIGHT CHAIN 3-RELATED"/>
    <property type="match status" value="1"/>
</dbReference>
<dbReference type="Pfam" id="PF02991">
    <property type="entry name" value="ATG8"/>
    <property type="match status" value="1"/>
</dbReference>
<dbReference type="SUPFAM" id="SSF54236">
    <property type="entry name" value="Ubiquitin-like"/>
    <property type="match status" value="1"/>
</dbReference>
<accession>Q6C794</accession>
<reference key="1">
    <citation type="journal article" date="2004" name="Nature">
        <title>Genome evolution in yeasts.</title>
        <authorList>
            <person name="Dujon B."/>
            <person name="Sherman D."/>
            <person name="Fischer G."/>
            <person name="Durrens P."/>
            <person name="Casaregola S."/>
            <person name="Lafontaine I."/>
            <person name="de Montigny J."/>
            <person name="Marck C."/>
            <person name="Neuveglise C."/>
            <person name="Talla E."/>
            <person name="Goffard N."/>
            <person name="Frangeul L."/>
            <person name="Aigle M."/>
            <person name="Anthouard V."/>
            <person name="Babour A."/>
            <person name="Barbe V."/>
            <person name="Barnay S."/>
            <person name="Blanchin S."/>
            <person name="Beckerich J.-M."/>
            <person name="Beyne E."/>
            <person name="Bleykasten C."/>
            <person name="Boisrame A."/>
            <person name="Boyer J."/>
            <person name="Cattolico L."/>
            <person name="Confanioleri F."/>
            <person name="de Daruvar A."/>
            <person name="Despons L."/>
            <person name="Fabre E."/>
            <person name="Fairhead C."/>
            <person name="Ferry-Dumazet H."/>
            <person name="Groppi A."/>
            <person name="Hantraye F."/>
            <person name="Hennequin C."/>
            <person name="Jauniaux N."/>
            <person name="Joyet P."/>
            <person name="Kachouri R."/>
            <person name="Kerrest A."/>
            <person name="Koszul R."/>
            <person name="Lemaire M."/>
            <person name="Lesur I."/>
            <person name="Ma L."/>
            <person name="Muller H."/>
            <person name="Nicaud J.-M."/>
            <person name="Nikolski M."/>
            <person name="Oztas S."/>
            <person name="Ozier-Kalogeropoulos O."/>
            <person name="Pellenz S."/>
            <person name="Potier S."/>
            <person name="Richard G.-F."/>
            <person name="Straub M.-L."/>
            <person name="Suleau A."/>
            <person name="Swennen D."/>
            <person name="Tekaia F."/>
            <person name="Wesolowski-Louvel M."/>
            <person name="Westhof E."/>
            <person name="Wirth B."/>
            <person name="Zeniou-Meyer M."/>
            <person name="Zivanovic Y."/>
            <person name="Bolotin-Fukuhara M."/>
            <person name="Thierry A."/>
            <person name="Bouchier C."/>
            <person name="Caudron B."/>
            <person name="Scarpelli C."/>
            <person name="Gaillardin C."/>
            <person name="Weissenbach J."/>
            <person name="Wincker P."/>
            <person name="Souciet J.-L."/>
        </authorList>
    </citation>
    <scope>NUCLEOTIDE SEQUENCE [LARGE SCALE GENOMIC DNA]</scope>
    <source>
        <strain>CLIB 122 / E 150</strain>
    </source>
</reference>
<sequence>MRSKFKDEHPFEKRRAEAERIRKKYDDRVPVICEKVEKSDIPVIDKKKYLVPADLTVGQFVYVIRKRIKLSSERAIFIFVDDVLPPTAALMSSIYEEHKDEDGFLYVTYSGENTFGDLEQYRLE</sequence>
<name>ATG8_YARLI</name>
<gene>
    <name type="primary">ATG8</name>
    <name type="ordered locus">YALI0E02662g</name>
</gene>
<feature type="chain" id="PRO_0000017240" description="Autophagy-related protein 8">
    <location>
        <begin position="1"/>
        <end position="116"/>
    </location>
</feature>
<feature type="propeptide" id="PRO_0000017241" description="Removed in mature form" evidence="1">
    <location>
        <begin position="117"/>
        <end position="124"/>
    </location>
</feature>
<feature type="site" description="Cleavage; by ATG4" evidence="1">
    <location>
        <begin position="116"/>
        <end position="117"/>
    </location>
</feature>
<feature type="lipid moiety-binding region" description="Phosphatidylethanolamine amidated glycine" evidence="1">
    <location>
        <position position="116"/>
    </location>
</feature>
<comment type="function">
    <text evidence="1">Ubiquitin-like modifier involved in autophagosome formation. With ATG4, mediates the delivery of the autophagosomes to the vacuole via the microtubule cytoskeleton. Required for selective autophagic degradation of the nucleus (nucleophagy) as well as for mitophagy which contributes to regulate mitochondrial quantity and quality by eliminating the mitochondria to a basal level to fulfill cellular energy requirements and preventing excess ROS production. Participates also in membrane fusion events that take place in the early secretory pathway. Also involved in endoplasmic reticulum-specific autophagic process and is essential for the survival of cells subjected to severe ER stress. The ATG8-PE conjugate mediates tethering between adjacent membranes and stimulates membrane hemifusion, leading to expansion of the autophagosomal membrane during autophagy.</text>
</comment>
<comment type="subcellular location">
    <subcellularLocation>
        <location evidence="1">Cytoplasmic vesicle</location>
        <location evidence="1">Autophagosome membrane</location>
        <topology evidence="1">Lipid-anchor</topology>
    </subcellularLocation>
    <subcellularLocation>
        <location evidence="1">Vacuole membrane</location>
        <topology evidence="1">Lipid-anchor</topology>
    </subcellularLocation>
</comment>
<comment type="PTM">
    <text evidence="1">The C-terminal 8 residues are removed to expose Gly-116 at the C-terminus. The C-terminal Gly is then amidated with phosphatidylethanolamine by an activating system similar to that for ubiquitin.</text>
</comment>
<comment type="similarity">
    <text evidence="2">Belongs to the ATG8 family.</text>
</comment>
<evidence type="ECO:0000250" key="1">
    <source>
        <dbReference type="UniProtKB" id="P38182"/>
    </source>
</evidence>
<evidence type="ECO:0000305" key="2"/>
<protein>
    <recommendedName>
        <fullName>Autophagy-related protein 8</fullName>
    </recommendedName>
    <alternativeName>
        <fullName>Autophagy-related ubiquitin-like modifier ATG8</fullName>
    </alternativeName>
</protein>